<keyword id="KW-0489">Methyltransferase</keyword>
<keyword id="KW-0949">S-adenosyl-L-methionine</keyword>
<keyword id="KW-0808">Transferase</keyword>
<keyword id="KW-0819">tRNA processing</keyword>
<dbReference type="EC" id="2.1.1.33" evidence="2"/>
<dbReference type="EMBL" id="AL157959">
    <property type="protein sequence ID" value="CAM08688.1"/>
    <property type="molecule type" value="Genomic_DNA"/>
</dbReference>
<dbReference type="PIR" id="A81846">
    <property type="entry name" value="A81846"/>
</dbReference>
<dbReference type="RefSeq" id="WP_002227255.1">
    <property type="nucleotide sequence ID" value="NC_003116.1"/>
</dbReference>
<dbReference type="SMR" id="Q9JU19"/>
<dbReference type="EnsemblBacteria" id="CAM08688">
    <property type="protein sequence ID" value="CAM08688"/>
    <property type="gene ID" value="NMA1542"/>
</dbReference>
<dbReference type="GeneID" id="93385872"/>
<dbReference type="KEGG" id="nma:NMA1542"/>
<dbReference type="HOGENOM" id="CLU_050910_0_1_4"/>
<dbReference type="UniPathway" id="UPA00989"/>
<dbReference type="Proteomes" id="UP000000626">
    <property type="component" value="Chromosome"/>
</dbReference>
<dbReference type="GO" id="GO:0043527">
    <property type="term" value="C:tRNA methyltransferase complex"/>
    <property type="evidence" value="ECO:0007669"/>
    <property type="project" value="TreeGrafter"/>
</dbReference>
<dbReference type="GO" id="GO:0008176">
    <property type="term" value="F:tRNA (guanine(46)-N7)-methyltransferase activity"/>
    <property type="evidence" value="ECO:0007669"/>
    <property type="project" value="UniProtKB-UniRule"/>
</dbReference>
<dbReference type="CDD" id="cd02440">
    <property type="entry name" value="AdoMet_MTases"/>
    <property type="match status" value="1"/>
</dbReference>
<dbReference type="FunFam" id="3.40.50.150:FF:000035">
    <property type="entry name" value="tRNA (guanine-N(7)-)-methyltransferase"/>
    <property type="match status" value="1"/>
</dbReference>
<dbReference type="Gene3D" id="3.40.50.150">
    <property type="entry name" value="Vaccinia Virus protein VP39"/>
    <property type="match status" value="1"/>
</dbReference>
<dbReference type="HAMAP" id="MF_01057">
    <property type="entry name" value="tRNA_methyltr_TrmB"/>
    <property type="match status" value="1"/>
</dbReference>
<dbReference type="InterPro" id="IPR029063">
    <property type="entry name" value="SAM-dependent_MTases_sf"/>
</dbReference>
<dbReference type="InterPro" id="IPR003358">
    <property type="entry name" value="tRNA_(Gua-N-7)_MeTrfase_Trmb"/>
</dbReference>
<dbReference type="InterPro" id="IPR055361">
    <property type="entry name" value="tRNA_methyltr_TrmB_bact"/>
</dbReference>
<dbReference type="NCBIfam" id="TIGR00091">
    <property type="entry name" value="tRNA (guanosine(46)-N7)-methyltransferase TrmB"/>
    <property type="match status" value="1"/>
</dbReference>
<dbReference type="PANTHER" id="PTHR23417">
    <property type="entry name" value="3-DEOXY-D-MANNO-OCTULOSONIC-ACID TRANSFERASE/TRNA GUANINE-N 7 - -METHYLTRANSFERASE"/>
    <property type="match status" value="1"/>
</dbReference>
<dbReference type="PANTHER" id="PTHR23417:SF14">
    <property type="entry name" value="PENTACOTRIPEPTIDE-REPEAT REGION OF PRORP DOMAIN-CONTAINING PROTEIN"/>
    <property type="match status" value="1"/>
</dbReference>
<dbReference type="Pfam" id="PF02390">
    <property type="entry name" value="Methyltransf_4"/>
    <property type="match status" value="1"/>
</dbReference>
<dbReference type="SUPFAM" id="SSF53335">
    <property type="entry name" value="S-adenosyl-L-methionine-dependent methyltransferases"/>
    <property type="match status" value="1"/>
</dbReference>
<dbReference type="PROSITE" id="PS51625">
    <property type="entry name" value="SAM_MT_TRMB"/>
    <property type="match status" value="1"/>
</dbReference>
<accession>Q9JU19</accession>
<accession>A1ISD2</accession>
<organism>
    <name type="scientific">Neisseria meningitidis serogroup A / serotype 4A (strain DSM 15465 / Z2491)</name>
    <dbReference type="NCBI Taxonomy" id="122587"/>
    <lineage>
        <taxon>Bacteria</taxon>
        <taxon>Pseudomonadati</taxon>
        <taxon>Pseudomonadota</taxon>
        <taxon>Betaproteobacteria</taxon>
        <taxon>Neisseriales</taxon>
        <taxon>Neisseriaceae</taxon>
        <taxon>Neisseria</taxon>
    </lineage>
</organism>
<reference key="1">
    <citation type="journal article" date="2000" name="Nature">
        <title>Complete DNA sequence of a serogroup A strain of Neisseria meningitidis Z2491.</title>
        <authorList>
            <person name="Parkhill J."/>
            <person name="Achtman M."/>
            <person name="James K.D."/>
            <person name="Bentley S.D."/>
            <person name="Churcher C.M."/>
            <person name="Klee S.R."/>
            <person name="Morelli G."/>
            <person name="Basham D."/>
            <person name="Brown D."/>
            <person name="Chillingworth T."/>
            <person name="Davies R.M."/>
            <person name="Davis P."/>
            <person name="Devlin K."/>
            <person name="Feltwell T."/>
            <person name="Hamlin N."/>
            <person name="Holroyd S."/>
            <person name="Jagels K."/>
            <person name="Leather S."/>
            <person name="Moule S."/>
            <person name="Mungall K.L."/>
            <person name="Quail M.A."/>
            <person name="Rajandream M.A."/>
            <person name="Rutherford K.M."/>
            <person name="Simmonds M."/>
            <person name="Skelton J."/>
            <person name="Whitehead S."/>
            <person name="Spratt B.G."/>
            <person name="Barrell B.G."/>
        </authorList>
    </citation>
    <scope>NUCLEOTIDE SEQUENCE [LARGE SCALE GENOMIC DNA]</scope>
    <source>
        <strain>DSM 15465 / Z2491</strain>
    </source>
</reference>
<name>TRMB_NEIMA</name>
<gene>
    <name evidence="2" type="primary">trmB</name>
    <name type="ordered locus">NMA1542</name>
</gene>
<comment type="function">
    <text evidence="2">Catalyzes the formation of N(7)-methylguanine at position 46 (m7G46) in tRNA.</text>
</comment>
<comment type="catalytic activity">
    <reaction evidence="2">
        <text>guanosine(46) in tRNA + S-adenosyl-L-methionine = N(7)-methylguanosine(46) in tRNA + S-adenosyl-L-homocysteine</text>
        <dbReference type="Rhea" id="RHEA:42708"/>
        <dbReference type="Rhea" id="RHEA-COMP:10188"/>
        <dbReference type="Rhea" id="RHEA-COMP:10189"/>
        <dbReference type="ChEBI" id="CHEBI:57856"/>
        <dbReference type="ChEBI" id="CHEBI:59789"/>
        <dbReference type="ChEBI" id="CHEBI:74269"/>
        <dbReference type="ChEBI" id="CHEBI:74480"/>
        <dbReference type="EC" id="2.1.1.33"/>
    </reaction>
</comment>
<comment type="pathway">
    <text evidence="2">tRNA modification; N(7)-methylguanine-tRNA biosynthesis.</text>
</comment>
<comment type="similarity">
    <text evidence="2">Belongs to the class I-like SAM-binding methyltransferase superfamily. TrmB family.</text>
</comment>
<sequence>MTDTAENQTQNNWQAEHPRSIRSFVLRQSHMTAAQQRAIDTLWGSFGIDYQATPADLDARFGSSRPKILEIGFGMGTATAEIARRLPETDFLAIDVHGPGVGNLLKLIEENHLENIRVMRHDAVEVVENMLQDGSLDGIHIFFPDPWHKKRHHKRRLIQAPFIAKLLPKLKTGGYIHLATDWEEYAQQMLEVLSSFDSLQNTAADYAPTPDYRPETKFEARGKRLGHGVWDLVFKRIG</sequence>
<feature type="chain" id="PRO_0000171362" description="tRNA (guanine-N(7)-)-methyltransferase">
    <location>
        <begin position="1"/>
        <end position="238"/>
    </location>
</feature>
<feature type="active site" evidence="1">
    <location>
        <position position="145"/>
    </location>
</feature>
<feature type="binding site" evidence="2">
    <location>
        <position position="70"/>
    </location>
    <ligand>
        <name>S-adenosyl-L-methionine</name>
        <dbReference type="ChEBI" id="CHEBI:59789"/>
    </ligand>
</feature>
<feature type="binding site" evidence="2">
    <location>
        <position position="95"/>
    </location>
    <ligand>
        <name>S-adenosyl-L-methionine</name>
        <dbReference type="ChEBI" id="CHEBI:59789"/>
    </ligand>
</feature>
<feature type="binding site" evidence="2">
    <location>
        <position position="122"/>
    </location>
    <ligand>
        <name>S-adenosyl-L-methionine</name>
        <dbReference type="ChEBI" id="CHEBI:59789"/>
    </ligand>
</feature>
<feature type="binding site" evidence="2">
    <location>
        <position position="145"/>
    </location>
    <ligand>
        <name>S-adenosyl-L-methionine</name>
        <dbReference type="ChEBI" id="CHEBI:59789"/>
    </ligand>
</feature>
<feature type="binding site" evidence="2">
    <location>
        <position position="149"/>
    </location>
    <ligand>
        <name>substrate</name>
    </ligand>
</feature>
<feature type="binding site" evidence="2">
    <location>
        <position position="181"/>
    </location>
    <ligand>
        <name>substrate</name>
    </ligand>
</feature>
<feature type="binding site" evidence="2">
    <location>
        <begin position="216"/>
        <end position="219"/>
    </location>
    <ligand>
        <name>substrate</name>
    </ligand>
</feature>
<evidence type="ECO:0000250" key="1"/>
<evidence type="ECO:0000255" key="2">
    <source>
        <dbReference type="HAMAP-Rule" id="MF_01057"/>
    </source>
</evidence>
<proteinExistence type="inferred from homology"/>
<protein>
    <recommendedName>
        <fullName evidence="2">tRNA (guanine-N(7)-)-methyltransferase</fullName>
        <ecNumber evidence="2">2.1.1.33</ecNumber>
    </recommendedName>
    <alternativeName>
        <fullName evidence="2">tRNA (guanine(46)-N(7))-methyltransferase</fullName>
    </alternativeName>
    <alternativeName>
        <fullName evidence="2">tRNA(m7G46)-methyltransferase</fullName>
    </alternativeName>
</protein>